<gene>
    <name evidence="1" type="primary">hslV</name>
    <name type="ordered locus">YPTS_0100</name>
</gene>
<keyword id="KW-0021">Allosteric enzyme</keyword>
<keyword id="KW-0963">Cytoplasm</keyword>
<keyword id="KW-0378">Hydrolase</keyword>
<keyword id="KW-0479">Metal-binding</keyword>
<keyword id="KW-0645">Protease</keyword>
<keyword id="KW-0915">Sodium</keyword>
<keyword id="KW-0888">Threonine protease</keyword>
<evidence type="ECO:0000255" key="1">
    <source>
        <dbReference type="HAMAP-Rule" id="MF_00248"/>
    </source>
</evidence>
<dbReference type="EC" id="3.4.25.2" evidence="1"/>
<dbReference type="EMBL" id="CP001048">
    <property type="protein sequence ID" value="ACC87099.1"/>
    <property type="molecule type" value="Genomic_DNA"/>
</dbReference>
<dbReference type="RefSeq" id="WP_002208942.1">
    <property type="nucleotide sequence ID" value="NZ_CP009780.1"/>
</dbReference>
<dbReference type="SMR" id="B2JZC6"/>
<dbReference type="MEROPS" id="T01.006"/>
<dbReference type="GeneID" id="97458253"/>
<dbReference type="KEGG" id="ypb:YPTS_0100"/>
<dbReference type="PATRIC" id="fig|502801.10.peg.3778"/>
<dbReference type="GO" id="GO:0009376">
    <property type="term" value="C:HslUV protease complex"/>
    <property type="evidence" value="ECO:0007669"/>
    <property type="project" value="UniProtKB-UniRule"/>
</dbReference>
<dbReference type="GO" id="GO:0005839">
    <property type="term" value="C:proteasome core complex"/>
    <property type="evidence" value="ECO:0007669"/>
    <property type="project" value="InterPro"/>
</dbReference>
<dbReference type="GO" id="GO:0046872">
    <property type="term" value="F:metal ion binding"/>
    <property type="evidence" value="ECO:0007669"/>
    <property type="project" value="UniProtKB-KW"/>
</dbReference>
<dbReference type="GO" id="GO:0004298">
    <property type="term" value="F:threonine-type endopeptidase activity"/>
    <property type="evidence" value="ECO:0007669"/>
    <property type="project" value="UniProtKB-KW"/>
</dbReference>
<dbReference type="GO" id="GO:0051603">
    <property type="term" value="P:proteolysis involved in protein catabolic process"/>
    <property type="evidence" value="ECO:0007669"/>
    <property type="project" value="InterPro"/>
</dbReference>
<dbReference type="CDD" id="cd01913">
    <property type="entry name" value="protease_HslV"/>
    <property type="match status" value="1"/>
</dbReference>
<dbReference type="FunFam" id="3.60.20.10:FF:000002">
    <property type="entry name" value="ATP-dependent protease subunit HslV"/>
    <property type="match status" value="1"/>
</dbReference>
<dbReference type="Gene3D" id="3.60.20.10">
    <property type="entry name" value="Glutamine Phosphoribosylpyrophosphate, subunit 1, domain 1"/>
    <property type="match status" value="1"/>
</dbReference>
<dbReference type="HAMAP" id="MF_00248">
    <property type="entry name" value="HslV"/>
    <property type="match status" value="1"/>
</dbReference>
<dbReference type="InterPro" id="IPR022281">
    <property type="entry name" value="ATP-dep_Prtase_HsIV_su"/>
</dbReference>
<dbReference type="InterPro" id="IPR029055">
    <property type="entry name" value="Ntn_hydrolases_N"/>
</dbReference>
<dbReference type="InterPro" id="IPR001353">
    <property type="entry name" value="Proteasome_sua/b"/>
</dbReference>
<dbReference type="InterPro" id="IPR023333">
    <property type="entry name" value="Proteasome_suB-type"/>
</dbReference>
<dbReference type="NCBIfam" id="TIGR03692">
    <property type="entry name" value="ATP_dep_HslV"/>
    <property type="match status" value="1"/>
</dbReference>
<dbReference type="NCBIfam" id="NF003964">
    <property type="entry name" value="PRK05456.1"/>
    <property type="match status" value="1"/>
</dbReference>
<dbReference type="PANTHER" id="PTHR32194:SF0">
    <property type="entry name" value="ATP-DEPENDENT PROTEASE SUBUNIT HSLV"/>
    <property type="match status" value="1"/>
</dbReference>
<dbReference type="PANTHER" id="PTHR32194">
    <property type="entry name" value="METALLOPROTEASE TLDD"/>
    <property type="match status" value="1"/>
</dbReference>
<dbReference type="Pfam" id="PF00227">
    <property type="entry name" value="Proteasome"/>
    <property type="match status" value="1"/>
</dbReference>
<dbReference type="PIRSF" id="PIRSF039093">
    <property type="entry name" value="HslV"/>
    <property type="match status" value="1"/>
</dbReference>
<dbReference type="SUPFAM" id="SSF56235">
    <property type="entry name" value="N-terminal nucleophile aminohydrolases (Ntn hydrolases)"/>
    <property type="match status" value="1"/>
</dbReference>
<dbReference type="PROSITE" id="PS51476">
    <property type="entry name" value="PROTEASOME_BETA_2"/>
    <property type="match status" value="1"/>
</dbReference>
<organism>
    <name type="scientific">Yersinia pseudotuberculosis serotype IB (strain PB1/+)</name>
    <dbReference type="NCBI Taxonomy" id="502801"/>
    <lineage>
        <taxon>Bacteria</taxon>
        <taxon>Pseudomonadati</taxon>
        <taxon>Pseudomonadota</taxon>
        <taxon>Gammaproteobacteria</taxon>
        <taxon>Enterobacterales</taxon>
        <taxon>Yersiniaceae</taxon>
        <taxon>Yersinia</taxon>
    </lineage>
</organism>
<protein>
    <recommendedName>
        <fullName evidence="1">ATP-dependent protease subunit HslV</fullName>
        <ecNumber evidence="1">3.4.25.2</ecNumber>
    </recommendedName>
</protein>
<feature type="chain" id="PRO_1000100926" description="ATP-dependent protease subunit HslV">
    <location>
        <begin position="1"/>
        <end position="174"/>
    </location>
</feature>
<feature type="active site" evidence="1">
    <location>
        <position position="2"/>
    </location>
</feature>
<feature type="binding site" evidence="1">
    <location>
        <position position="157"/>
    </location>
    <ligand>
        <name>Na(+)</name>
        <dbReference type="ChEBI" id="CHEBI:29101"/>
    </ligand>
</feature>
<feature type="binding site" evidence="1">
    <location>
        <position position="160"/>
    </location>
    <ligand>
        <name>Na(+)</name>
        <dbReference type="ChEBI" id="CHEBI:29101"/>
    </ligand>
</feature>
<feature type="binding site" evidence="1">
    <location>
        <position position="163"/>
    </location>
    <ligand>
        <name>Na(+)</name>
        <dbReference type="ChEBI" id="CHEBI:29101"/>
    </ligand>
</feature>
<name>HSLV_YERPB</name>
<reference key="1">
    <citation type="submission" date="2008-04" db="EMBL/GenBank/DDBJ databases">
        <title>Complete sequence of Yersinia pseudotuberculosis PB1/+.</title>
        <authorList>
            <person name="Copeland A."/>
            <person name="Lucas S."/>
            <person name="Lapidus A."/>
            <person name="Glavina del Rio T."/>
            <person name="Dalin E."/>
            <person name="Tice H."/>
            <person name="Bruce D."/>
            <person name="Goodwin L."/>
            <person name="Pitluck S."/>
            <person name="Munk A.C."/>
            <person name="Brettin T."/>
            <person name="Detter J.C."/>
            <person name="Han C."/>
            <person name="Tapia R."/>
            <person name="Schmutz J."/>
            <person name="Larimer F."/>
            <person name="Land M."/>
            <person name="Hauser L."/>
            <person name="Challacombe J.F."/>
            <person name="Green L."/>
            <person name="Lindler L.E."/>
            <person name="Nikolich M.P."/>
            <person name="Richardson P."/>
        </authorList>
    </citation>
    <scope>NUCLEOTIDE SEQUENCE [LARGE SCALE GENOMIC DNA]</scope>
    <source>
        <strain>PB1/+</strain>
    </source>
</reference>
<sequence length="174" mass="18895">MTTIVSVRRDGHVVIGGDGQVTLGNTVMKGNAKKVRRLYNNKVIAGFAGGTADAFTLFELFERKLEMHQGHLTKAAVELAKDWRTDRMLRKLEALLAVADETASLIITGNGDVVQPEDDLIAIGSGGPYAQSAARALLENTELGARDIVEKSLSIAGDICIYTNRFQTIEELTY</sequence>
<proteinExistence type="inferred from homology"/>
<accession>B2JZC6</accession>
<comment type="function">
    <text evidence="1">Protease subunit of a proteasome-like degradation complex believed to be a general protein degrading machinery.</text>
</comment>
<comment type="catalytic activity">
    <reaction evidence="1">
        <text>ATP-dependent cleavage of peptide bonds with broad specificity.</text>
        <dbReference type="EC" id="3.4.25.2"/>
    </reaction>
</comment>
<comment type="activity regulation">
    <text evidence="1">Allosterically activated by HslU binding.</text>
</comment>
<comment type="subunit">
    <text evidence="1">A double ring-shaped homohexamer of HslV is capped on each side by a ring-shaped HslU homohexamer. The assembly of the HslU/HslV complex is dependent on binding of ATP.</text>
</comment>
<comment type="subcellular location">
    <subcellularLocation>
        <location evidence="1">Cytoplasm</location>
    </subcellularLocation>
</comment>
<comment type="similarity">
    <text evidence="1">Belongs to the peptidase T1B family. HslV subfamily.</text>
</comment>